<feature type="chain" id="PRO_0000142274" description="Imidazole glycerol phosphate synthase subunit HisF">
    <location>
        <begin position="1"/>
        <end position="255"/>
    </location>
</feature>
<feature type="active site" evidence="1">
    <location>
        <position position="12"/>
    </location>
</feature>
<feature type="active site" evidence="1">
    <location>
        <position position="131"/>
    </location>
</feature>
<name>HIS6_ZYMMO</name>
<keyword id="KW-0028">Amino-acid biosynthesis</keyword>
<keyword id="KW-0963">Cytoplasm</keyword>
<keyword id="KW-0368">Histidine biosynthesis</keyword>
<keyword id="KW-0456">Lyase</keyword>
<keyword id="KW-1185">Reference proteome</keyword>
<protein>
    <recommendedName>
        <fullName evidence="1">Imidazole glycerol phosphate synthase subunit HisF</fullName>
        <ecNumber evidence="1">4.3.2.10</ecNumber>
    </recommendedName>
    <alternativeName>
        <fullName evidence="1">IGP synthase cyclase subunit</fullName>
    </alternativeName>
    <alternativeName>
        <fullName evidence="1">IGP synthase subunit HisF</fullName>
    </alternativeName>
    <alternativeName>
        <fullName evidence="1">ImGP synthase subunit HisF</fullName>
        <shortName evidence="1">IGPS subunit HisF</shortName>
    </alternativeName>
</protein>
<gene>
    <name evidence="1" type="primary">hisF</name>
    <name type="ordered locus">ZMO1500</name>
</gene>
<reference key="1">
    <citation type="journal article" date="2005" name="Nat. Biotechnol.">
        <title>The genome sequence of the ethanologenic bacterium Zymomonas mobilis ZM4.</title>
        <authorList>
            <person name="Seo J.-S."/>
            <person name="Chong H."/>
            <person name="Park H.S."/>
            <person name="Yoon K.-O."/>
            <person name="Jung C."/>
            <person name="Kim J.J."/>
            <person name="Hong J.H."/>
            <person name="Kim H."/>
            <person name="Kim J.-H."/>
            <person name="Kil J.-I."/>
            <person name="Park C.J."/>
            <person name="Oh H.-M."/>
            <person name="Lee J.-S."/>
            <person name="Jin S.-J."/>
            <person name="Um H.-W."/>
            <person name="Lee H.-J."/>
            <person name="Oh S.-J."/>
            <person name="Kim J.Y."/>
            <person name="Kang H.L."/>
            <person name="Lee S.Y."/>
            <person name="Lee K.J."/>
            <person name="Kang H.S."/>
        </authorList>
    </citation>
    <scope>NUCLEOTIDE SEQUENCE [LARGE SCALE GENOMIC DNA]</scope>
    <source>
        <strain>ATCC 31821 / ZM4 / CP4</strain>
    </source>
</reference>
<accession>Q5NMD6</accession>
<proteinExistence type="inferred from homology"/>
<sequence length="255" mass="26790">MTLCTRIIPCLDVADGRVVKGVNFTDLMDAGDPVEQAKVYDAAGADELCFLDISASHEGRGTMLDVVARTAEVCFMPLTVGGGVRQVEDARALLLAGADKVAVNSAAVARPELVAEIADRFGAQCVVAAIDARRNGDHWEVYTHGGRRPTGINALDHALNLTRLGAGEILLTSMDKDGTRDGYDLELTRLVADSVPVPVIASGGVGNLDHMVEGVTKGHASALLAASIFHFGQYSLAEAHEALAKAGLTVRHPPE</sequence>
<dbReference type="EC" id="4.3.2.10" evidence="1"/>
<dbReference type="EMBL" id="AE008692">
    <property type="protein sequence ID" value="AAV90124.1"/>
    <property type="molecule type" value="Genomic_DNA"/>
</dbReference>
<dbReference type="RefSeq" id="WP_011241273.1">
    <property type="nucleotide sequence ID" value="NZ_CP035711.1"/>
</dbReference>
<dbReference type="SMR" id="Q5NMD6"/>
<dbReference type="STRING" id="264203.ZMO1500"/>
<dbReference type="GeneID" id="79905153"/>
<dbReference type="KEGG" id="zmo:ZMO1500"/>
<dbReference type="eggNOG" id="COG0107">
    <property type="taxonomic scope" value="Bacteria"/>
</dbReference>
<dbReference type="HOGENOM" id="CLU_048577_4_0_5"/>
<dbReference type="BRENDA" id="4.3.2.10">
    <property type="organism ID" value="6765"/>
</dbReference>
<dbReference type="UniPathway" id="UPA00031">
    <property type="reaction ID" value="UER00010"/>
</dbReference>
<dbReference type="Proteomes" id="UP000001173">
    <property type="component" value="Chromosome"/>
</dbReference>
<dbReference type="GO" id="GO:0005737">
    <property type="term" value="C:cytoplasm"/>
    <property type="evidence" value="ECO:0007669"/>
    <property type="project" value="UniProtKB-SubCell"/>
</dbReference>
<dbReference type="GO" id="GO:0000107">
    <property type="term" value="F:imidazoleglycerol-phosphate synthase activity"/>
    <property type="evidence" value="ECO:0007669"/>
    <property type="project" value="UniProtKB-UniRule"/>
</dbReference>
<dbReference type="GO" id="GO:0016829">
    <property type="term" value="F:lyase activity"/>
    <property type="evidence" value="ECO:0007669"/>
    <property type="project" value="UniProtKB-KW"/>
</dbReference>
<dbReference type="GO" id="GO:0000105">
    <property type="term" value="P:L-histidine biosynthetic process"/>
    <property type="evidence" value="ECO:0007669"/>
    <property type="project" value="UniProtKB-UniRule"/>
</dbReference>
<dbReference type="CDD" id="cd04731">
    <property type="entry name" value="HisF"/>
    <property type="match status" value="1"/>
</dbReference>
<dbReference type="FunFam" id="3.20.20.70:FF:000006">
    <property type="entry name" value="Imidazole glycerol phosphate synthase subunit HisF"/>
    <property type="match status" value="1"/>
</dbReference>
<dbReference type="Gene3D" id="3.20.20.70">
    <property type="entry name" value="Aldolase class I"/>
    <property type="match status" value="1"/>
</dbReference>
<dbReference type="HAMAP" id="MF_01013">
    <property type="entry name" value="HisF"/>
    <property type="match status" value="1"/>
</dbReference>
<dbReference type="InterPro" id="IPR013785">
    <property type="entry name" value="Aldolase_TIM"/>
</dbReference>
<dbReference type="InterPro" id="IPR006062">
    <property type="entry name" value="His_biosynth"/>
</dbReference>
<dbReference type="InterPro" id="IPR004651">
    <property type="entry name" value="HisF"/>
</dbReference>
<dbReference type="InterPro" id="IPR050064">
    <property type="entry name" value="IGPS_HisA/HisF"/>
</dbReference>
<dbReference type="InterPro" id="IPR011060">
    <property type="entry name" value="RibuloseP-bd_barrel"/>
</dbReference>
<dbReference type="NCBIfam" id="TIGR00735">
    <property type="entry name" value="hisF"/>
    <property type="match status" value="1"/>
</dbReference>
<dbReference type="PANTHER" id="PTHR21235:SF2">
    <property type="entry name" value="IMIDAZOLE GLYCEROL PHOSPHATE SYNTHASE HISHF"/>
    <property type="match status" value="1"/>
</dbReference>
<dbReference type="PANTHER" id="PTHR21235">
    <property type="entry name" value="IMIDAZOLE GLYCEROL PHOSPHATE SYNTHASE SUBUNIT HISF/H IGP SYNTHASE SUBUNIT HISF/H"/>
    <property type="match status" value="1"/>
</dbReference>
<dbReference type="Pfam" id="PF00977">
    <property type="entry name" value="His_biosynth"/>
    <property type="match status" value="1"/>
</dbReference>
<dbReference type="SUPFAM" id="SSF51366">
    <property type="entry name" value="Ribulose-phoshate binding barrel"/>
    <property type="match status" value="1"/>
</dbReference>
<comment type="function">
    <text evidence="1">IGPS catalyzes the conversion of PRFAR and glutamine to IGP, AICAR and glutamate. The HisF subunit catalyzes the cyclization activity that produces IGP and AICAR from PRFAR using the ammonia provided by the HisH subunit.</text>
</comment>
<comment type="catalytic activity">
    <reaction evidence="1">
        <text>5-[(5-phospho-1-deoxy-D-ribulos-1-ylimino)methylamino]-1-(5-phospho-beta-D-ribosyl)imidazole-4-carboxamide + L-glutamine = D-erythro-1-(imidazol-4-yl)glycerol 3-phosphate + 5-amino-1-(5-phospho-beta-D-ribosyl)imidazole-4-carboxamide + L-glutamate + H(+)</text>
        <dbReference type="Rhea" id="RHEA:24793"/>
        <dbReference type="ChEBI" id="CHEBI:15378"/>
        <dbReference type="ChEBI" id="CHEBI:29985"/>
        <dbReference type="ChEBI" id="CHEBI:58278"/>
        <dbReference type="ChEBI" id="CHEBI:58359"/>
        <dbReference type="ChEBI" id="CHEBI:58475"/>
        <dbReference type="ChEBI" id="CHEBI:58525"/>
        <dbReference type="EC" id="4.3.2.10"/>
    </reaction>
</comment>
<comment type="pathway">
    <text evidence="1">Amino-acid biosynthesis; L-histidine biosynthesis; L-histidine from 5-phospho-alpha-D-ribose 1-diphosphate: step 5/9.</text>
</comment>
<comment type="subunit">
    <text evidence="1">Heterodimer of HisH and HisF.</text>
</comment>
<comment type="subcellular location">
    <subcellularLocation>
        <location evidence="1">Cytoplasm</location>
    </subcellularLocation>
</comment>
<comment type="similarity">
    <text evidence="1">Belongs to the HisA/HisF family.</text>
</comment>
<evidence type="ECO:0000255" key="1">
    <source>
        <dbReference type="HAMAP-Rule" id="MF_01013"/>
    </source>
</evidence>
<organism>
    <name type="scientific">Zymomonas mobilis subsp. mobilis (strain ATCC 31821 / ZM4 / CP4)</name>
    <dbReference type="NCBI Taxonomy" id="264203"/>
    <lineage>
        <taxon>Bacteria</taxon>
        <taxon>Pseudomonadati</taxon>
        <taxon>Pseudomonadota</taxon>
        <taxon>Alphaproteobacteria</taxon>
        <taxon>Sphingomonadales</taxon>
        <taxon>Zymomonadaceae</taxon>
        <taxon>Zymomonas</taxon>
    </lineage>
</organism>